<dbReference type="EMBL" id="AE005174">
    <property type="protein sequence ID" value="AAG58975.1"/>
    <property type="status" value="ALT_INIT"/>
    <property type="molecule type" value="Genomic_DNA"/>
</dbReference>
<dbReference type="EMBL" id="BA000007">
    <property type="protein sequence ID" value="BAB38137.1"/>
    <property type="status" value="ALT_INIT"/>
    <property type="molecule type" value="Genomic_DNA"/>
</dbReference>
<dbReference type="RefSeq" id="NP_312741.1">
    <property type="nucleotide sequence ID" value="NC_002695.1"/>
</dbReference>
<dbReference type="RefSeq" id="WP_001280776.1">
    <property type="nucleotide sequence ID" value="NZ_VOAI01000017.1"/>
</dbReference>
<dbReference type="PDB" id="3DXB">
    <property type="method" value="X-ray"/>
    <property type="resolution" value="2.20 A"/>
    <property type="chains" value="A/B/C/D/E/F/G/H=1-109"/>
</dbReference>
<dbReference type="PDB" id="5E4W">
    <property type="method" value="X-ray"/>
    <property type="resolution" value="2.80 A"/>
    <property type="chains" value="A/B=3-109"/>
</dbReference>
<dbReference type="PDB" id="5IKN">
    <property type="method" value="X-ray"/>
    <property type="resolution" value="4.80 A"/>
    <property type="chains" value="K/L/M=4-108"/>
</dbReference>
<dbReference type="PDBsum" id="3DXB"/>
<dbReference type="PDBsum" id="5E4W"/>
<dbReference type="PDBsum" id="5IKN"/>
<dbReference type="BMRB" id="P0AA27"/>
<dbReference type="SMR" id="P0AA27"/>
<dbReference type="STRING" id="155864.Z5291"/>
<dbReference type="GeneID" id="915255"/>
<dbReference type="GeneID" id="93778163"/>
<dbReference type="KEGG" id="ece:Z5291"/>
<dbReference type="KEGG" id="ecs:ECs_4714"/>
<dbReference type="PATRIC" id="fig|386585.9.peg.4918"/>
<dbReference type="eggNOG" id="COG3118">
    <property type="taxonomic scope" value="Bacteria"/>
</dbReference>
<dbReference type="HOGENOM" id="CLU_090389_10_2_6"/>
<dbReference type="OMA" id="HIHYVTD"/>
<dbReference type="EvolutionaryTrace" id="P0AA27"/>
<dbReference type="Proteomes" id="UP000000558">
    <property type="component" value="Chromosome"/>
</dbReference>
<dbReference type="Proteomes" id="UP000002519">
    <property type="component" value="Chromosome"/>
</dbReference>
<dbReference type="GO" id="GO:0005829">
    <property type="term" value="C:cytosol"/>
    <property type="evidence" value="ECO:0007669"/>
    <property type="project" value="TreeGrafter"/>
</dbReference>
<dbReference type="GO" id="GO:0015035">
    <property type="term" value="F:protein-disulfide reductase activity"/>
    <property type="evidence" value="ECO:0007669"/>
    <property type="project" value="InterPro"/>
</dbReference>
<dbReference type="GO" id="GO:0045454">
    <property type="term" value="P:cell redox homeostasis"/>
    <property type="evidence" value="ECO:0007669"/>
    <property type="project" value="TreeGrafter"/>
</dbReference>
<dbReference type="CDD" id="cd02947">
    <property type="entry name" value="TRX_family"/>
    <property type="match status" value="1"/>
</dbReference>
<dbReference type="FunFam" id="3.40.30.10:FF:000001">
    <property type="entry name" value="Thioredoxin"/>
    <property type="match status" value="1"/>
</dbReference>
<dbReference type="Gene3D" id="3.40.30.10">
    <property type="entry name" value="Glutaredoxin"/>
    <property type="match status" value="1"/>
</dbReference>
<dbReference type="InterPro" id="IPR005746">
    <property type="entry name" value="Thioredoxin"/>
</dbReference>
<dbReference type="InterPro" id="IPR036249">
    <property type="entry name" value="Thioredoxin-like_sf"/>
</dbReference>
<dbReference type="InterPro" id="IPR017937">
    <property type="entry name" value="Thioredoxin_CS"/>
</dbReference>
<dbReference type="InterPro" id="IPR013766">
    <property type="entry name" value="Thioredoxin_domain"/>
</dbReference>
<dbReference type="NCBIfam" id="NF006898">
    <property type="entry name" value="PRK09381.1"/>
    <property type="match status" value="1"/>
</dbReference>
<dbReference type="NCBIfam" id="TIGR01068">
    <property type="entry name" value="thioredoxin"/>
    <property type="match status" value="1"/>
</dbReference>
<dbReference type="PANTHER" id="PTHR45663">
    <property type="entry name" value="GEO12009P1"/>
    <property type="match status" value="1"/>
</dbReference>
<dbReference type="PANTHER" id="PTHR45663:SF11">
    <property type="entry name" value="GEO12009P1"/>
    <property type="match status" value="1"/>
</dbReference>
<dbReference type="Pfam" id="PF00085">
    <property type="entry name" value="Thioredoxin"/>
    <property type="match status" value="1"/>
</dbReference>
<dbReference type="PIRSF" id="PIRSF000077">
    <property type="entry name" value="Thioredoxin"/>
    <property type="match status" value="1"/>
</dbReference>
<dbReference type="PRINTS" id="PR00421">
    <property type="entry name" value="THIOREDOXIN"/>
</dbReference>
<dbReference type="SUPFAM" id="SSF52833">
    <property type="entry name" value="Thioredoxin-like"/>
    <property type="match status" value="1"/>
</dbReference>
<dbReference type="PROSITE" id="PS00194">
    <property type="entry name" value="THIOREDOXIN_1"/>
    <property type="match status" value="1"/>
</dbReference>
<dbReference type="PROSITE" id="PS51352">
    <property type="entry name" value="THIOREDOXIN_2"/>
    <property type="match status" value="1"/>
</dbReference>
<evidence type="ECO:0000250" key="1"/>
<evidence type="ECO:0000255" key="2">
    <source>
        <dbReference type="PROSITE-ProRule" id="PRU00691"/>
    </source>
</evidence>
<evidence type="ECO:0000305" key="3"/>
<evidence type="ECO:0007829" key="4">
    <source>
        <dbReference type="PDB" id="3DXB"/>
    </source>
</evidence>
<evidence type="ECO:0007829" key="5">
    <source>
        <dbReference type="PDB" id="5E4W"/>
    </source>
</evidence>
<feature type="initiator methionine" description="Removed" evidence="1">
    <location>
        <position position="1"/>
    </location>
</feature>
<feature type="chain" id="PRO_0000120098" description="Thioredoxin 1">
    <location>
        <begin position="2"/>
        <end position="109"/>
    </location>
</feature>
<feature type="domain" description="Thioredoxin" evidence="2">
    <location>
        <begin position="2"/>
        <end position="109"/>
    </location>
</feature>
<feature type="active site" description="Nucleophile" evidence="1">
    <location>
        <position position="33"/>
    </location>
</feature>
<feature type="active site" description="Nucleophile" evidence="1">
    <location>
        <position position="36"/>
    </location>
</feature>
<feature type="site" description="Deprotonates C-terminal active site Cys" evidence="1">
    <location>
        <position position="27"/>
    </location>
</feature>
<feature type="site" description="Contributes to redox potential value" evidence="1">
    <location>
        <position position="34"/>
    </location>
</feature>
<feature type="site" description="Contributes to redox potential value" evidence="1">
    <location>
        <position position="35"/>
    </location>
</feature>
<feature type="modified residue" description="N6-acetyllysine" evidence="1">
    <location>
        <position position="70"/>
    </location>
</feature>
<feature type="disulfide bond" description="Redox-active" evidence="2">
    <location>
        <begin position="33"/>
        <end position="36"/>
    </location>
</feature>
<feature type="strand" evidence="5">
    <location>
        <begin position="5"/>
        <end position="8"/>
    </location>
</feature>
<feature type="turn" evidence="4">
    <location>
        <begin position="10"/>
        <end position="12"/>
    </location>
</feature>
<feature type="helix" evidence="4">
    <location>
        <begin position="13"/>
        <end position="17"/>
    </location>
</feature>
<feature type="strand" evidence="4">
    <location>
        <begin position="21"/>
        <end position="29"/>
    </location>
</feature>
<feature type="helix" evidence="4">
    <location>
        <begin position="34"/>
        <end position="49"/>
    </location>
</feature>
<feature type="turn" evidence="4">
    <location>
        <begin position="50"/>
        <end position="53"/>
    </location>
</feature>
<feature type="strand" evidence="4">
    <location>
        <begin position="54"/>
        <end position="60"/>
    </location>
</feature>
<feature type="turn" evidence="4">
    <location>
        <begin position="61"/>
        <end position="63"/>
    </location>
</feature>
<feature type="helix" evidence="4">
    <location>
        <begin position="68"/>
        <end position="71"/>
    </location>
</feature>
<feature type="strand" evidence="4">
    <location>
        <begin position="75"/>
        <end position="83"/>
    </location>
</feature>
<feature type="strand" evidence="4">
    <location>
        <begin position="86"/>
        <end position="93"/>
    </location>
</feature>
<feature type="helix" evidence="4">
    <location>
        <begin position="97"/>
        <end position="107"/>
    </location>
</feature>
<organism>
    <name type="scientific">Escherichia coli O157:H7</name>
    <dbReference type="NCBI Taxonomy" id="83334"/>
    <lineage>
        <taxon>Bacteria</taxon>
        <taxon>Pseudomonadati</taxon>
        <taxon>Pseudomonadota</taxon>
        <taxon>Gammaproteobacteria</taxon>
        <taxon>Enterobacterales</taxon>
        <taxon>Enterobacteriaceae</taxon>
        <taxon>Escherichia</taxon>
    </lineage>
</organism>
<accession>P0AA27</accession>
<accession>P00274</accession>
<accession>P76750</accession>
<accession>Q47674</accession>
<accession>Q8XAT2</accession>
<gene>
    <name type="primary">trxA</name>
    <name type="ordered locus">Z5291</name>
    <name type="ordered locus">ECs4714</name>
</gene>
<keyword id="KW-0002">3D-structure</keyword>
<keyword id="KW-0007">Acetylation</keyword>
<keyword id="KW-1015">Disulfide bond</keyword>
<keyword id="KW-0249">Electron transport</keyword>
<keyword id="KW-0676">Redox-active center</keyword>
<keyword id="KW-1185">Reference proteome</keyword>
<keyword id="KW-0813">Transport</keyword>
<comment type="function">
    <text evidence="1">Participates in various redox reactions through the reversible oxidation of its active center dithiol to a disulfide and catalyzes dithiol-disulfide exchange reactions.</text>
</comment>
<comment type="subunit">
    <text evidence="1">Monomer.</text>
</comment>
<comment type="similarity">
    <text evidence="3">Belongs to the thioredoxin family.</text>
</comment>
<comment type="sequence caution" evidence="3">
    <conflict type="erroneous initiation">
        <sequence resource="EMBL-CDS" id="AAG58975"/>
    </conflict>
    <text>Extended N-terminus.</text>
</comment>
<comment type="sequence caution" evidence="3">
    <conflict type="erroneous initiation">
        <sequence resource="EMBL-CDS" id="BAB38137"/>
    </conflict>
    <text>Extended N-terminus.</text>
</comment>
<name>THIO_ECO57</name>
<reference key="1">
    <citation type="journal article" date="2001" name="Nature">
        <title>Genome sequence of enterohaemorrhagic Escherichia coli O157:H7.</title>
        <authorList>
            <person name="Perna N.T."/>
            <person name="Plunkett G. III"/>
            <person name="Burland V."/>
            <person name="Mau B."/>
            <person name="Glasner J.D."/>
            <person name="Rose D.J."/>
            <person name="Mayhew G.F."/>
            <person name="Evans P.S."/>
            <person name="Gregor J."/>
            <person name="Kirkpatrick H.A."/>
            <person name="Posfai G."/>
            <person name="Hackett J."/>
            <person name="Klink S."/>
            <person name="Boutin A."/>
            <person name="Shao Y."/>
            <person name="Miller L."/>
            <person name="Grotbeck E.J."/>
            <person name="Davis N.W."/>
            <person name="Lim A."/>
            <person name="Dimalanta E.T."/>
            <person name="Potamousis K."/>
            <person name="Apodaca J."/>
            <person name="Anantharaman T.S."/>
            <person name="Lin J."/>
            <person name="Yen G."/>
            <person name="Schwartz D.C."/>
            <person name="Welch R.A."/>
            <person name="Blattner F.R."/>
        </authorList>
    </citation>
    <scope>NUCLEOTIDE SEQUENCE [LARGE SCALE GENOMIC DNA]</scope>
    <source>
        <strain>O157:H7 / EDL933 / ATCC 700927 / EHEC</strain>
    </source>
</reference>
<reference key="2">
    <citation type="journal article" date="2001" name="DNA Res.">
        <title>Complete genome sequence of enterohemorrhagic Escherichia coli O157:H7 and genomic comparison with a laboratory strain K-12.</title>
        <authorList>
            <person name="Hayashi T."/>
            <person name="Makino K."/>
            <person name="Ohnishi M."/>
            <person name="Kurokawa K."/>
            <person name="Ishii K."/>
            <person name="Yokoyama K."/>
            <person name="Han C.-G."/>
            <person name="Ohtsubo E."/>
            <person name="Nakayama K."/>
            <person name="Murata T."/>
            <person name="Tanaka M."/>
            <person name="Tobe T."/>
            <person name="Iida T."/>
            <person name="Takami H."/>
            <person name="Honda T."/>
            <person name="Sasakawa C."/>
            <person name="Ogasawara N."/>
            <person name="Yasunaga T."/>
            <person name="Kuhara S."/>
            <person name="Shiba T."/>
            <person name="Hattori M."/>
            <person name="Shinagawa H."/>
        </authorList>
    </citation>
    <scope>NUCLEOTIDE SEQUENCE [LARGE SCALE GENOMIC DNA]</scope>
    <source>
        <strain>O157:H7 / Sakai / RIMD 0509952 / EHEC</strain>
    </source>
</reference>
<sequence length="109" mass="11807">MSDKIIHLTDDSFDTDVLKADGAILVDFWAEWCGPCKMIAPILDEIADEYQGKLTVAKLNIDQNPGTAPKYGIRGIPTLLLFKNGEVAATKVGALSKGQLKEFLDANLA</sequence>
<proteinExistence type="evidence at protein level"/>
<protein>
    <recommendedName>
        <fullName>Thioredoxin 1</fullName>
        <shortName>Trx-1</shortName>
    </recommendedName>
</protein>